<name>FTHS_METNO</name>
<sequence length="558" mass="58827">MPTDIEIARAATLQPISAIAEKIGIPDAALHPHGRHIAKIDHAHIASLEAKPEGKLILVTAISPTPAGEGKTTTTVGLGDALNRIGKKAVICLREPSLGPCFGMKGGAAGGGKSQVVPMEAINLHFTGDFHAITSAHSLAAALIDNHVYWGNELNIDVRRIAWRRVVDMNDRALRSITQSLGGVANGYPREDGFDITVASEVMAVFCLARDLADLEARLGRIVVAETRDRKAVTLADLKATGAMAVLLKDALQPNLVQTLEGSPALIHGGPFANIAHGCNSVIATRTGLRLGEYAVTEAGFGADLGAEKFIDIKCRQTGLSPSAVVIVATLRALKMHGGVEKKALGTENIAALEKGFVNLARHVENVRRFGLPVVVAVNHFHTDTEAELATLKALCRDKLDVEAITCRHWAEGGAGAEELARAVVALAEGGAPKTPNFVYPEDAKLTDKIRTIAQTLYGAADIQVESKAATKLAQFEKDGYGKLPVCMAKTQYSFSTDPNLMGAPSGHVVAVRDVRLSAGAGFVVVICGEIMTMPGLPKVPAAEGIHLDANGQIEGLF</sequence>
<accession>B8IBS4</accession>
<comment type="catalytic activity">
    <reaction evidence="1">
        <text>(6S)-5,6,7,8-tetrahydrofolate + formate + ATP = (6R)-10-formyltetrahydrofolate + ADP + phosphate</text>
        <dbReference type="Rhea" id="RHEA:20221"/>
        <dbReference type="ChEBI" id="CHEBI:15740"/>
        <dbReference type="ChEBI" id="CHEBI:30616"/>
        <dbReference type="ChEBI" id="CHEBI:43474"/>
        <dbReference type="ChEBI" id="CHEBI:57453"/>
        <dbReference type="ChEBI" id="CHEBI:195366"/>
        <dbReference type="ChEBI" id="CHEBI:456216"/>
        <dbReference type="EC" id="6.3.4.3"/>
    </reaction>
</comment>
<comment type="pathway">
    <text evidence="1">One-carbon metabolism; tetrahydrofolate interconversion.</text>
</comment>
<comment type="similarity">
    <text evidence="1">Belongs to the formate--tetrahydrofolate ligase family.</text>
</comment>
<evidence type="ECO:0000255" key="1">
    <source>
        <dbReference type="HAMAP-Rule" id="MF_01543"/>
    </source>
</evidence>
<dbReference type="EC" id="6.3.4.3" evidence="1"/>
<dbReference type="EMBL" id="CP001349">
    <property type="protein sequence ID" value="ACL59328.1"/>
    <property type="molecule type" value="Genomic_DNA"/>
</dbReference>
<dbReference type="RefSeq" id="WP_015930966.1">
    <property type="nucleotide sequence ID" value="NC_011894.1"/>
</dbReference>
<dbReference type="SMR" id="B8IBS4"/>
<dbReference type="STRING" id="460265.Mnod_4459"/>
<dbReference type="KEGG" id="mno:Mnod_4459"/>
<dbReference type="eggNOG" id="COG2759">
    <property type="taxonomic scope" value="Bacteria"/>
</dbReference>
<dbReference type="HOGENOM" id="CLU_003601_3_3_5"/>
<dbReference type="OrthoDB" id="9761733at2"/>
<dbReference type="UniPathway" id="UPA00193"/>
<dbReference type="Proteomes" id="UP000008207">
    <property type="component" value="Chromosome"/>
</dbReference>
<dbReference type="GO" id="GO:0005524">
    <property type="term" value="F:ATP binding"/>
    <property type="evidence" value="ECO:0007669"/>
    <property type="project" value="UniProtKB-UniRule"/>
</dbReference>
<dbReference type="GO" id="GO:0004329">
    <property type="term" value="F:formate-tetrahydrofolate ligase activity"/>
    <property type="evidence" value="ECO:0007669"/>
    <property type="project" value="UniProtKB-UniRule"/>
</dbReference>
<dbReference type="GO" id="GO:0035999">
    <property type="term" value="P:tetrahydrofolate interconversion"/>
    <property type="evidence" value="ECO:0007669"/>
    <property type="project" value="UniProtKB-UniRule"/>
</dbReference>
<dbReference type="CDD" id="cd00477">
    <property type="entry name" value="FTHFS"/>
    <property type="match status" value="1"/>
</dbReference>
<dbReference type="FunFam" id="3.30.1510.10:FF:000001">
    <property type="entry name" value="Formate--tetrahydrofolate ligase"/>
    <property type="match status" value="1"/>
</dbReference>
<dbReference type="FunFam" id="3.10.410.10:FF:000001">
    <property type="entry name" value="Putative formate--tetrahydrofolate ligase"/>
    <property type="match status" value="1"/>
</dbReference>
<dbReference type="Gene3D" id="3.30.1510.10">
    <property type="entry name" value="Domain 2, N(10)-formyltetrahydrofolate synthetase"/>
    <property type="match status" value="1"/>
</dbReference>
<dbReference type="Gene3D" id="3.10.410.10">
    <property type="entry name" value="Formyltetrahydrofolate synthetase, domain 3"/>
    <property type="match status" value="1"/>
</dbReference>
<dbReference type="Gene3D" id="3.40.50.300">
    <property type="entry name" value="P-loop containing nucleotide triphosphate hydrolases"/>
    <property type="match status" value="1"/>
</dbReference>
<dbReference type="HAMAP" id="MF_01543">
    <property type="entry name" value="FTHFS"/>
    <property type="match status" value="1"/>
</dbReference>
<dbReference type="InterPro" id="IPR000559">
    <property type="entry name" value="Formate_THF_ligase"/>
</dbReference>
<dbReference type="InterPro" id="IPR020628">
    <property type="entry name" value="Formate_THF_ligase_CS"/>
</dbReference>
<dbReference type="InterPro" id="IPR027417">
    <property type="entry name" value="P-loop_NTPase"/>
</dbReference>
<dbReference type="NCBIfam" id="NF010030">
    <property type="entry name" value="PRK13505.1"/>
    <property type="match status" value="1"/>
</dbReference>
<dbReference type="Pfam" id="PF01268">
    <property type="entry name" value="FTHFS"/>
    <property type="match status" value="1"/>
</dbReference>
<dbReference type="SUPFAM" id="SSF52540">
    <property type="entry name" value="P-loop containing nucleoside triphosphate hydrolases"/>
    <property type="match status" value="1"/>
</dbReference>
<dbReference type="PROSITE" id="PS00721">
    <property type="entry name" value="FTHFS_1"/>
    <property type="match status" value="1"/>
</dbReference>
<dbReference type="PROSITE" id="PS00722">
    <property type="entry name" value="FTHFS_2"/>
    <property type="match status" value="1"/>
</dbReference>
<gene>
    <name evidence="1" type="primary">fhs</name>
    <name type="ordered locus">Mnod_4459</name>
</gene>
<feature type="chain" id="PRO_1000185258" description="Formate--tetrahydrofolate ligase">
    <location>
        <begin position="1"/>
        <end position="558"/>
    </location>
</feature>
<feature type="binding site" evidence="1">
    <location>
        <begin position="65"/>
        <end position="72"/>
    </location>
    <ligand>
        <name>ATP</name>
        <dbReference type="ChEBI" id="CHEBI:30616"/>
    </ligand>
</feature>
<keyword id="KW-0067">ATP-binding</keyword>
<keyword id="KW-0436">Ligase</keyword>
<keyword id="KW-0547">Nucleotide-binding</keyword>
<keyword id="KW-0554">One-carbon metabolism</keyword>
<keyword id="KW-1185">Reference proteome</keyword>
<organism>
    <name type="scientific">Methylobacterium nodulans (strain LMG 21967 / CNCM I-2342 / ORS 2060)</name>
    <dbReference type="NCBI Taxonomy" id="460265"/>
    <lineage>
        <taxon>Bacteria</taxon>
        <taxon>Pseudomonadati</taxon>
        <taxon>Pseudomonadota</taxon>
        <taxon>Alphaproteobacteria</taxon>
        <taxon>Hyphomicrobiales</taxon>
        <taxon>Methylobacteriaceae</taxon>
        <taxon>Methylobacterium</taxon>
    </lineage>
</organism>
<reference key="1">
    <citation type="submission" date="2009-01" db="EMBL/GenBank/DDBJ databases">
        <title>Complete sequence of chromosome of Methylobacterium nodulans ORS 2060.</title>
        <authorList>
            <consortium name="US DOE Joint Genome Institute"/>
            <person name="Lucas S."/>
            <person name="Copeland A."/>
            <person name="Lapidus A."/>
            <person name="Glavina del Rio T."/>
            <person name="Dalin E."/>
            <person name="Tice H."/>
            <person name="Bruce D."/>
            <person name="Goodwin L."/>
            <person name="Pitluck S."/>
            <person name="Sims D."/>
            <person name="Brettin T."/>
            <person name="Detter J.C."/>
            <person name="Han C."/>
            <person name="Larimer F."/>
            <person name="Land M."/>
            <person name="Hauser L."/>
            <person name="Kyrpides N."/>
            <person name="Ivanova N."/>
            <person name="Marx C.J."/>
            <person name="Richardson P."/>
        </authorList>
    </citation>
    <scope>NUCLEOTIDE SEQUENCE [LARGE SCALE GENOMIC DNA]</scope>
    <source>
        <strain>LMG 21967 / CNCM I-2342 / ORS 2060</strain>
    </source>
</reference>
<proteinExistence type="inferred from homology"/>
<protein>
    <recommendedName>
        <fullName evidence="1">Formate--tetrahydrofolate ligase</fullName>
        <ecNumber evidence="1">6.3.4.3</ecNumber>
    </recommendedName>
    <alternativeName>
        <fullName evidence="1">Formyltetrahydrofolate synthetase</fullName>
        <shortName evidence="1">FHS</shortName>
        <shortName evidence="1">FTHFS</shortName>
    </alternativeName>
</protein>